<organism>
    <name type="scientific">Escherichia coli (strain K12 / MC4100 / BW2952)</name>
    <dbReference type="NCBI Taxonomy" id="595496"/>
    <lineage>
        <taxon>Bacteria</taxon>
        <taxon>Pseudomonadati</taxon>
        <taxon>Pseudomonadota</taxon>
        <taxon>Gammaproteobacteria</taxon>
        <taxon>Enterobacterales</taxon>
        <taxon>Enterobacteriaceae</taxon>
        <taxon>Escherichia</taxon>
    </lineage>
</organism>
<sequence length="511" mass="57912">MMKMRWLSAAVMLTLYTSSSWAFSIDDVAKQAQSLAGKGYETPKSNLPSVFRDMKYADYQQIQFNHDKAYWNNLKTPFKLEFYHQGMYFDTPVKINEVTATAVKRIKYSPDYFTFGDVQHDKDTVKDLGFAGFKVLYPINSKDKNDEIVSMLGASYFRVIGAGQVYGLSARGLAIDTALPSGEEFPRFKEFWIERPKPTDKRLTIYALLDSPRATGAYKFVVMPGRDTVVDVQSKIYLRDKVGKLGVAPLTSMFLFGPNQPSPANNYRPELHDSNGLSIHAGNGEWIWRPLNNPKHLAVSSFSMENPQGFGLLQRGRDFSRFEDLDDRYDLRPSAWVTPKGEWGKGSVELVEIPTNDETNDNIVAYWTPDQLPEPGKEMNFKYTITFSRDEDKLHAPDNAWVQQTRRSTGDVKQSNLIRQPDGTIAFVVDFTGAEMKKLPEDTPVTAQTSIGDNGEIVESTVRYNPVTKGWRLVMRVKVKDAKKTTEMRAALVNADQTLSETWSYQLPANE</sequence>
<evidence type="ECO:0000255" key="1">
    <source>
        <dbReference type="HAMAP-Rule" id="MF_01069"/>
    </source>
</evidence>
<feature type="signal peptide" evidence="1">
    <location>
        <begin position="1"/>
        <end position="22"/>
    </location>
</feature>
<feature type="chain" id="PRO_1000213471" description="Glucans biosynthesis protein G">
    <location>
        <begin position="23"/>
        <end position="511"/>
    </location>
</feature>
<reference key="1">
    <citation type="journal article" date="2009" name="J. Bacteriol.">
        <title>Genomic sequencing reveals regulatory mutations and recombinational events in the widely used MC4100 lineage of Escherichia coli K-12.</title>
        <authorList>
            <person name="Ferenci T."/>
            <person name="Zhou Z."/>
            <person name="Betteridge T."/>
            <person name="Ren Y."/>
            <person name="Liu Y."/>
            <person name="Feng L."/>
            <person name="Reeves P.R."/>
            <person name="Wang L."/>
        </authorList>
    </citation>
    <scope>NUCLEOTIDE SEQUENCE [LARGE SCALE GENOMIC DNA]</scope>
    <source>
        <strain>K12 / MC4100 / BW2952</strain>
    </source>
</reference>
<keyword id="KW-0574">Periplasm</keyword>
<keyword id="KW-0732">Signal</keyword>
<gene>
    <name evidence="1" type="primary">mdoG</name>
    <name evidence="1" type="synonym">opgG</name>
    <name type="ordered locus">BWG_0897</name>
</gene>
<dbReference type="EMBL" id="CP001396">
    <property type="protein sequence ID" value="ACR63299.1"/>
    <property type="molecule type" value="Genomic_DNA"/>
</dbReference>
<dbReference type="RefSeq" id="WP_001343212.1">
    <property type="nucleotide sequence ID" value="NC_012759.1"/>
</dbReference>
<dbReference type="SMR" id="C4ZRY9"/>
<dbReference type="GeneID" id="75203636"/>
<dbReference type="KEGG" id="ebw:BWG_0897"/>
<dbReference type="HOGENOM" id="CLU_023403_2_0_6"/>
<dbReference type="UniPathway" id="UPA00637"/>
<dbReference type="GO" id="GO:0030288">
    <property type="term" value="C:outer membrane-bounded periplasmic space"/>
    <property type="evidence" value="ECO:0007669"/>
    <property type="project" value="TreeGrafter"/>
</dbReference>
<dbReference type="GO" id="GO:0030246">
    <property type="term" value="F:carbohydrate binding"/>
    <property type="evidence" value="ECO:0007669"/>
    <property type="project" value="InterPro"/>
</dbReference>
<dbReference type="GO" id="GO:0003824">
    <property type="term" value="F:catalytic activity"/>
    <property type="evidence" value="ECO:0007669"/>
    <property type="project" value="InterPro"/>
</dbReference>
<dbReference type="GO" id="GO:0051274">
    <property type="term" value="P:beta-glucan biosynthetic process"/>
    <property type="evidence" value="ECO:0007669"/>
    <property type="project" value="TreeGrafter"/>
</dbReference>
<dbReference type="FunFam" id="2.60.40.10:FF:000294">
    <property type="entry name" value="Glucans biosynthesis protein G"/>
    <property type="match status" value="1"/>
</dbReference>
<dbReference type="FunFam" id="2.70.98.10:FF:000001">
    <property type="entry name" value="Glucans biosynthesis protein G"/>
    <property type="match status" value="1"/>
</dbReference>
<dbReference type="Gene3D" id="2.70.98.10">
    <property type="match status" value="1"/>
</dbReference>
<dbReference type="Gene3D" id="2.60.40.10">
    <property type="entry name" value="Immunoglobulins"/>
    <property type="match status" value="1"/>
</dbReference>
<dbReference type="HAMAP" id="MF_01069">
    <property type="entry name" value="MdoG_OpgG"/>
    <property type="match status" value="1"/>
</dbReference>
<dbReference type="InterPro" id="IPR011013">
    <property type="entry name" value="Gal_mutarotase_sf_dom"/>
</dbReference>
<dbReference type="InterPro" id="IPR014718">
    <property type="entry name" value="GH-type_carb-bd"/>
</dbReference>
<dbReference type="InterPro" id="IPR014438">
    <property type="entry name" value="Glucan_biosyn_MdoG/MdoD"/>
</dbReference>
<dbReference type="InterPro" id="IPR007444">
    <property type="entry name" value="Glucan_biosyn_MdoG_C"/>
</dbReference>
<dbReference type="InterPro" id="IPR013783">
    <property type="entry name" value="Ig-like_fold"/>
</dbReference>
<dbReference type="InterPro" id="IPR014756">
    <property type="entry name" value="Ig_E-set"/>
</dbReference>
<dbReference type="InterPro" id="IPR023704">
    <property type="entry name" value="MdoG_OpgG"/>
</dbReference>
<dbReference type="PANTHER" id="PTHR30504">
    <property type="entry name" value="GLUCANS BIOSYNTHESIS PROTEIN"/>
    <property type="match status" value="1"/>
</dbReference>
<dbReference type="PANTHER" id="PTHR30504:SF4">
    <property type="entry name" value="GLUCANS BIOSYNTHESIS PROTEIN G"/>
    <property type="match status" value="1"/>
</dbReference>
<dbReference type="Pfam" id="PF04349">
    <property type="entry name" value="MdoG"/>
    <property type="match status" value="1"/>
</dbReference>
<dbReference type="PIRSF" id="PIRSF006281">
    <property type="entry name" value="MdoG"/>
    <property type="match status" value="1"/>
</dbReference>
<dbReference type="SUPFAM" id="SSF81296">
    <property type="entry name" value="E set domains"/>
    <property type="match status" value="1"/>
</dbReference>
<dbReference type="SUPFAM" id="SSF74650">
    <property type="entry name" value="Galactose mutarotase-like"/>
    <property type="match status" value="1"/>
</dbReference>
<proteinExistence type="inferred from homology"/>
<comment type="function">
    <text evidence="1">Involved in the biosynthesis of osmoregulated periplasmic glucans (OPGs).</text>
</comment>
<comment type="pathway">
    <text evidence="1">Glycan metabolism; osmoregulated periplasmic glucan (OPG) biosynthesis.</text>
</comment>
<comment type="subcellular location">
    <subcellularLocation>
        <location evidence="1">Periplasm</location>
    </subcellularLocation>
</comment>
<comment type="similarity">
    <text evidence="1">Belongs to the OpgD/OpgG family.</text>
</comment>
<name>OPGG_ECOBW</name>
<accession>C4ZRY9</accession>
<protein>
    <recommendedName>
        <fullName evidence="1">Glucans biosynthesis protein G</fullName>
    </recommendedName>
</protein>